<dbReference type="EC" id="3.6.1.26" evidence="1"/>
<dbReference type="EMBL" id="CP001396">
    <property type="protein sequence ID" value="ACR62121.1"/>
    <property type="molecule type" value="Genomic_DNA"/>
</dbReference>
<dbReference type="RefSeq" id="WP_001326656.1">
    <property type="nucleotide sequence ID" value="NC_012759.1"/>
</dbReference>
<dbReference type="SMR" id="C5A085"/>
<dbReference type="KEGG" id="ebw:BWG_3587"/>
<dbReference type="HOGENOM" id="CLU_077117_0_1_6"/>
<dbReference type="UniPathway" id="UPA00609">
    <property type="reaction ID" value="UER00664"/>
</dbReference>
<dbReference type="GO" id="GO:0005886">
    <property type="term" value="C:plasma membrane"/>
    <property type="evidence" value="ECO:0007669"/>
    <property type="project" value="UniProtKB-SubCell"/>
</dbReference>
<dbReference type="GO" id="GO:0008715">
    <property type="term" value="F:CDP-diacylglycerol diphosphatase activity"/>
    <property type="evidence" value="ECO:0007669"/>
    <property type="project" value="UniProtKB-UniRule"/>
</dbReference>
<dbReference type="GO" id="GO:0046342">
    <property type="term" value="P:CDP-diacylglycerol catabolic process"/>
    <property type="evidence" value="ECO:0007669"/>
    <property type="project" value="UniProtKB-UniRule"/>
</dbReference>
<dbReference type="GO" id="GO:0008654">
    <property type="term" value="P:phospholipid biosynthetic process"/>
    <property type="evidence" value="ECO:0007669"/>
    <property type="project" value="UniProtKB-KW"/>
</dbReference>
<dbReference type="FunFam" id="3.30.428.30:FF:000001">
    <property type="entry name" value="CDP-diacylglycerol pyrophosphatase"/>
    <property type="match status" value="1"/>
</dbReference>
<dbReference type="Gene3D" id="3.30.428.30">
    <property type="entry name" value="HIT family - CDH-like"/>
    <property type="match status" value="1"/>
</dbReference>
<dbReference type="HAMAP" id="MF_00319">
    <property type="entry name" value="Cdh"/>
    <property type="match status" value="1"/>
</dbReference>
<dbReference type="InterPro" id="IPR003763">
    <property type="entry name" value="CDP-diacylglyc_Pase"/>
</dbReference>
<dbReference type="InterPro" id="IPR015993">
    <property type="entry name" value="CDP-diacylglyc_Pase_proteobac"/>
</dbReference>
<dbReference type="InterPro" id="IPR036265">
    <property type="entry name" value="HIT-like_sf"/>
</dbReference>
<dbReference type="NCBIfam" id="TIGR00672">
    <property type="entry name" value="cdh"/>
    <property type="match status" value="1"/>
</dbReference>
<dbReference type="NCBIfam" id="NF003986">
    <property type="entry name" value="PRK05471.1-5"/>
    <property type="match status" value="1"/>
</dbReference>
<dbReference type="NCBIfam" id="NF003987">
    <property type="entry name" value="PRK05471.1-6"/>
    <property type="match status" value="1"/>
</dbReference>
<dbReference type="Pfam" id="PF02611">
    <property type="entry name" value="CDH"/>
    <property type="match status" value="1"/>
</dbReference>
<dbReference type="PIRSF" id="PIRSF001273">
    <property type="entry name" value="CDH"/>
    <property type="match status" value="1"/>
</dbReference>
<dbReference type="SUPFAM" id="SSF54197">
    <property type="entry name" value="HIT-like"/>
    <property type="match status" value="1"/>
</dbReference>
<name>CDH_ECOBW</name>
<gene>
    <name evidence="1" type="primary">cdh</name>
    <name type="ordered locus">BWG_3587</name>
</gene>
<proteinExistence type="inferred from homology"/>
<comment type="catalytic activity">
    <reaction evidence="1">
        <text>a CDP-1,2-diacyl-sn-glycerol + H2O = a 1,2-diacyl-sn-glycero-3-phosphate + CMP + 2 H(+)</text>
        <dbReference type="Rhea" id="RHEA:15221"/>
        <dbReference type="ChEBI" id="CHEBI:15377"/>
        <dbReference type="ChEBI" id="CHEBI:15378"/>
        <dbReference type="ChEBI" id="CHEBI:58332"/>
        <dbReference type="ChEBI" id="CHEBI:58608"/>
        <dbReference type="ChEBI" id="CHEBI:60377"/>
        <dbReference type="EC" id="3.6.1.26"/>
    </reaction>
</comment>
<comment type="pathway">
    <text evidence="1">Phospholipid metabolism; CDP-diacylglycerol degradation; phosphatidate from CDP-diacylglycerol: step 1/1.</text>
</comment>
<comment type="subcellular location">
    <subcellularLocation>
        <location evidence="1">Cell inner membrane</location>
        <topology evidence="1">Single-pass membrane protein</topology>
    </subcellularLocation>
</comment>
<comment type="similarity">
    <text evidence="1">Belongs to the Cdh family.</text>
</comment>
<protein>
    <recommendedName>
        <fullName evidence="1">CDP-diacylglycerol pyrophosphatase</fullName>
        <ecNumber evidence="1">3.6.1.26</ecNumber>
    </recommendedName>
    <alternativeName>
        <fullName evidence="1">CDP-diacylglycerol phosphatidylhydrolase</fullName>
    </alternativeName>
    <alternativeName>
        <fullName evidence="1">CDP-diglyceride hydrolase</fullName>
    </alternativeName>
</protein>
<sequence>MKKAGLLFLVMIVIAVVAAGIGYWKLTGEESDTLRKIVLEECLPNQQQNQNPSPCAEVKPNAGYVVLKDLNGPLQYLLMPTYRINGTESPLLTDPSTPNFFWLAWQARDFMSKKYGQPVPDRAVSLAINSRTGRTQNHFHIHISCIRPDVRKQLDNNLANISSRWLPLPGGLRGHEYLARRVTESELVQRSPFMMLAEEVPEAREHMGRYGLAMVRQSDNSFVLLATQRNLLTLNRASAEEIQDHQCEILR</sequence>
<organism>
    <name type="scientific">Escherichia coli (strain K12 / MC4100 / BW2952)</name>
    <dbReference type="NCBI Taxonomy" id="595496"/>
    <lineage>
        <taxon>Bacteria</taxon>
        <taxon>Pseudomonadati</taxon>
        <taxon>Pseudomonadota</taxon>
        <taxon>Gammaproteobacteria</taxon>
        <taxon>Enterobacterales</taxon>
        <taxon>Enterobacteriaceae</taxon>
        <taxon>Escherichia</taxon>
    </lineage>
</organism>
<feature type="chain" id="PRO_1000205113" description="CDP-diacylglycerol pyrophosphatase">
    <location>
        <begin position="1"/>
        <end position="251"/>
    </location>
</feature>
<feature type="transmembrane region" description="Helical" evidence="1">
    <location>
        <begin position="4"/>
        <end position="24"/>
    </location>
</feature>
<reference key="1">
    <citation type="journal article" date="2009" name="J. Bacteriol.">
        <title>Genomic sequencing reveals regulatory mutations and recombinational events in the widely used MC4100 lineage of Escherichia coli K-12.</title>
        <authorList>
            <person name="Ferenci T."/>
            <person name="Zhou Z."/>
            <person name="Betteridge T."/>
            <person name="Ren Y."/>
            <person name="Liu Y."/>
            <person name="Feng L."/>
            <person name="Reeves P.R."/>
            <person name="Wang L."/>
        </authorList>
    </citation>
    <scope>NUCLEOTIDE SEQUENCE [LARGE SCALE GENOMIC DNA]</scope>
    <source>
        <strain>K12 / MC4100 / BW2952</strain>
    </source>
</reference>
<accession>C5A085</accession>
<keyword id="KW-0997">Cell inner membrane</keyword>
<keyword id="KW-1003">Cell membrane</keyword>
<keyword id="KW-0378">Hydrolase</keyword>
<keyword id="KW-0444">Lipid biosynthesis</keyword>
<keyword id="KW-0443">Lipid metabolism</keyword>
<keyword id="KW-0472">Membrane</keyword>
<keyword id="KW-0594">Phospholipid biosynthesis</keyword>
<keyword id="KW-1208">Phospholipid metabolism</keyword>
<keyword id="KW-0812">Transmembrane</keyword>
<keyword id="KW-1133">Transmembrane helix</keyword>
<evidence type="ECO:0000255" key="1">
    <source>
        <dbReference type="HAMAP-Rule" id="MF_00319"/>
    </source>
</evidence>